<sequence>MIYAGILAGGIGSRMGNVPLPKQFLSLQGKPIIIHTVEKFLMYKDFDEIIIATPQKWINYMLDLLNNYQLDDKKIKVIQGGDDRNHSIMNIIESIEQHKKLNDEDIIVTHDAVRPFLTNRIIRENVEYASQYGAVDTVVNAVDTIISSNDAQFISGIPIRSEMYQGQTPQTFKIKELKDSYLSLTQSQKEILTDACKILVELGKPVKLVKGELFNIKITTPYDLKVANSIITGAVDND</sequence>
<gene>
    <name evidence="1" type="primary">tarI</name>
    <name type="ordered locus">SE_0319</name>
</gene>
<comment type="function">
    <text evidence="1">Catalyzes the transfer of the cytidylyl group of CTP to D-ribitol 5-phosphate.</text>
</comment>
<comment type="catalytic activity">
    <reaction evidence="1">
        <text>D-ribitol 5-phosphate + CTP + H(+) = CDP-L-ribitol + diphosphate</text>
        <dbReference type="Rhea" id="RHEA:12456"/>
        <dbReference type="ChEBI" id="CHEBI:15378"/>
        <dbReference type="ChEBI" id="CHEBI:33019"/>
        <dbReference type="ChEBI" id="CHEBI:37563"/>
        <dbReference type="ChEBI" id="CHEBI:57608"/>
        <dbReference type="ChEBI" id="CHEBI:57695"/>
        <dbReference type="EC" id="2.7.7.40"/>
    </reaction>
</comment>
<comment type="pathway">
    <text evidence="1">Cell wall biogenesis; poly(ribitol phosphate) teichoic acid biosynthesis.</text>
</comment>
<comment type="similarity">
    <text evidence="1">Belongs to the IspD/TarI cytidylyltransferase family. TarI subfamily.</text>
</comment>
<dbReference type="EC" id="2.7.7.40" evidence="1"/>
<dbReference type="EMBL" id="AE015929">
    <property type="protein sequence ID" value="AAO03916.1"/>
    <property type="molecule type" value="Genomic_DNA"/>
</dbReference>
<dbReference type="RefSeq" id="NP_763874.1">
    <property type="nucleotide sequence ID" value="NC_004461.1"/>
</dbReference>
<dbReference type="RefSeq" id="WP_001832311.1">
    <property type="nucleotide sequence ID" value="NZ_WBME01000014.1"/>
</dbReference>
<dbReference type="SMR" id="Q8CQ77"/>
<dbReference type="KEGG" id="sep:SE_0319"/>
<dbReference type="PATRIC" id="fig|176280.10.peg.294"/>
<dbReference type="eggNOG" id="COG1211">
    <property type="taxonomic scope" value="Bacteria"/>
</dbReference>
<dbReference type="HOGENOM" id="CLU_061281_2_3_9"/>
<dbReference type="OrthoDB" id="9806837at2"/>
<dbReference type="UniPathway" id="UPA00790"/>
<dbReference type="Proteomes" id="UP000001411">
    <property type="component" value="Chromosome"/>
</dbReference>
<dbReference type="GO" id="GO:0050518">
    <property type="term" value="F:2-C-methyl-D-erythritol 4-phosphate cytidylyltransferase activity"/>
    <property type="evidence" value="ECO:0007669"/>
    <property type="project" value="TreeGrafter"/>
</dbReference>
<dbReference type="GO" id="GO:0047349">
    <property type="term" value="F:D-ribitol-5-phosphate cytidylyltransferase activity"/>
    <property type="evidence" value="ECO:0007669"/>
    <property type="project" value="UniProtKB-UniRule"/>
</dbReference>
<dbReference type="GO" id="GO:0071555">
    <property type="term" value="P:cell wall organization"/>
    <property type="evidence" value="ECO:0007669"/>
    <property type="project" value="UniProtKB-KW"/>
</dbReference>
<dbReference type="GO" id="GO:0008299">
    <property type="term" value="P:isoprenoid biosynthetic process"/>
    <property type="evidence" value="ECO:0007669"/>
    <property type="project" value="InterPro"/>
</dbReference>
<dbReference type="GO" id="GO:1902012">
    <property type="term" value="P:poly(ribitol phosphate) teichoic acid biosynthetic process"/>
    <property type="evidence" value="ECO:0007669"/>
    <property type="project" value="UniProtKB-UniRule"/>
</dbReference>
<dbReference type="CDD" id="cd02516">
    <property type="entry name" value="CDP-ME_synthetase"/>
    <property type="match status" value="1"/>
</dbReference>
<dbReference type="FunFam" id="3.90.550.10:FF:000003">
    <property type="entry name" value="2-C-methyl-D-erythritol 4-phosphate cytidylyltransferase"/>
    <property type="match status" value="1"/>
</dbReference>
<dbReference type="Gene3D" id="3.90.550.10">
    <property type="entry name" value="Spore Coat Polysaccharide Biosynthesis Protein SpsA, Chain A"/>
    <property type="match status" value="1"/>
</dbReference>
<dbReference type="HAMAP" id="MF_02068">
    <property type="entry name" value="TarI"/>
    <property type="match status" value="1"/>
</dbReference>
<dbReference type="InterPro" id="IPR034683">
    <property type="entry name" value="IspD/TarI"/>
</dbReference>
<dbReference type="InterPro" id="IPR050088">
    <property type="entry name" value="IspD/TarI_cytidylyltransf_bact"/>
</dbReference>
<dbReference type="InterPro" id="IPR018294">
    <property type="entry name" value="ISPD_synthase_CS"/>
</dbReference>
<dbReference type="InterPro" id="IPR029044">
    <property type="entry name" value="Nucleotide-diphossugar_trans"/>
</dbReference>
<dbReference type="InterPro" id="IPR034709">
    <property type="entry name" value="TarI"/>
</dbReference>
<dbReference type="NCBIfam" id="NF001183">
    <property type="entry name" value="PRK00155.1-3"/>
    <property type="match status" value="1"/>
</dbReference>
<dbReference type="PANTHER" id="PTHR32125">
    <property type="entry name" value="2-C-METHYL-D-ERYTHRITOL 4-PHOSPHATE CYTIDYLYLTRANSFERASE, CHLOROPLASTIC"/>
    <property type="match status" value="1"/>
</dbReference>
<dbReference type="PANTHER" id="PTHR32125:SF8">
    <property type="entry name" value="RIBITOL-5-PHOSPHATE CYTIDYLYLTRANSFERASE"/>
    <property type="match status" value="1"/>
</dbReference>
<dbReference type="Pfam" id="PF01128">
    <property type="entry name" value="IspD"/>
    <property type="match status" value="1"/>
</dbReference>
<dbReference type="SUPFAM" id="SSF53448">
    <property type="entry name" value="Nucleotide-diphospho-sugar transferases"/>
    <property type="match status" value="1"/>
</dbReference>
<dbReference type="PROSITE" id="PS01295">
    <property type="entry name" value="ISPD"/>
    <property type="match status" value="1"/>
</dbReference>
<feature type="chain" id="PRO_0000075625" description="Ribitol-5-phosphate cytidylyltransferase">
    <location>
        <begin position="1"/>
        <end position="238"/>
    </location>
</feature>
<feature type="binding site" evidence="1">
    <location>
        <begin position="7"/>
        <end position="10"/>
    </location>
    <ligand>
        <name>CTP</name>
        <dbReference type="ChEBI" id="CHEBI:37563"/>
    </ligand>
</feature>
<feature type="binding site" evidence="1">
    <location>
        <begin position="81"/>
        <end position="87"/>
    </location>
    <ligand>
        <name>CTP</name>
        <dbReference type="ChEBI" id="CHEBI:37563"/>
    </ligand>
</feature>
<feature type="site" description="Transition state stabilizer" evidence="1">
    <location>
        <position position="14"/>
    </location>
</feature>
<feature type="site" description="Transition state stabilizer" evidence="1">
    <location>
        <position position="22"/>
    </location>
</feature>
<feature type="site" description="Positions ribitol 5-phosphate for the nucleophilic attack" evidence="1">
    <location>
        <position position="160"/>
    </location>
</feature>
<feature type="site" description="Positions ribitol 5-phosphate for the nucleophilic attack" evidence="1">
    <location>
        <position position="217"/>
    </location>
</feature>
<name>TARI_STAES</name>
<organism>
    <name type="scientific">Staphylococcus epidermidis (strain ATCC 12228 / FDA PCI 1200)</name>
    <dbReference type="NCBI Taxonomy" id="176280"/>
    <lineage>
        <taxon>Bacteria</taxon>
        <taxon>Bacillati</taxon>
        <taxon>Bacillota</taxon>
        <taxon>Bacilli</taxon>
        <taxon>Bacillales</taxon>
        <taxon>Staphylococcaceae</taxon>
        <taxon>Staphylococcus</taxon>
    </lineage>
</organism>
<accession>Q8CQ77</accession>
<evidence type="ECO:0000255" key="1">
    <source>
        <dbReference type="HAMAP-Rule" id="MF_02068"/>
    </source>
</evidence>
<keyword id="KW-0961">Cell wall biogenesis/degradation</keyword>
<keyword id="KW-0548">Nucleotidyltransferase</keyword>
<keyword id="KW-0777">Teichoic acid biosynthesis</keyword>
<keyword id="KW-0808">Transferase</keyword>
<protein>
    <recommendedName>
        <fullName evidence="1">Ribitol-5-phosphate cytidylyltransferase</fullName>
        <ecNumber evidence="1">2.7.7.40</ecNumber>
    </recommendedName>
</protein>
<proteinExistence type="inferred from homology"/>
<reference key="1">
    <citation type="journal article" date="2003" name="Mol. Microbiol.">
        <title>Genome-based analysis of virulence genes in a non-biofilm-forming Staphylococcus epidermidis strain (ATCC 12228).</title>
        <authorList>
            <person name="Zhang Y.-Q."/>
            <person name="Ren S.-X."/>
            <person name="Li H.-L."/>
            <person name="Wang Y.-X."/>
            <person name="Fu G."/>
            <person name="Yang J."/>
            <person name="Qin Z.-Q."/>
            <person name="Miao Y.-G."/>
            <person name="Wang W.-Y."/>
            <person name="Chen R.-S."/>
            <person name="Shen Y."/>
            <person name="Chen Z."/>
            <person name="Yuan Z.-H."/>
            <person name="Zhao G.-P."/>
            <person name="Qu D."/>
            <person name="Danchin A."/>
            <person name="Wen Y.-M."/>
        </authorList>
    </citation>
    <scope>NUCLEOTIDE SEQUENCE [LARGE SCALE GENOMIC DNA]</scope>
    <source>
        <strain>ATCC 12228 / FDA PCI 1200</strain>
    </source>
</reference>